<protein>
    <recommendedName>
        <fullName evidence="2">Purine nucleoside phosphorylase DeoD-type</fullName>
        <shortName evidence="2">PNP</shortName>
        <ecNumber evidence="2">2.4.2.1</ecNumber>
    </recommendedName>
</protein>
<sequence>MATPHINAEMGDFADVVLMPGDPLRAKYIAETFLEDAREVNNVRGMLGFTGTYKGRKISVMGHGMGIPSCSIYTKELITDFGVKKIIRVGSCGAVLPHVKLRDVVIGMGACTDSKVNRIRFKDHDFAAIADFDMVRNAVDAAKALGVDARVGNLFSADLFYSPDGEMFDVMEKYGILGVEMEAAGIYGVAAEFGAKALTICTVSDHIRTHEQTTAAERQTTFNDMIKIALESVLLGNKE</sequence>
<feature type="chain" id="PRO_0000063163" description="Purine nucleoside phosphorylase DeoD-type">
    <location>
        <begin position="1"/>
        <end position="239"/>
    </location>
</feature>
<feature type="active site" description="Proton donor" evidence="2">
    <location>
        <position position="205"/>
    </location>
</feature>
<feature type="binding site" evidence="1">
    <location>
        <position position="5"/>
    </location>
    <ligand>
        <name>a purine D-ribonucleoside</name>
        <dbReference type="ChEBI" id="CHEBI:142355"/>
        <note>ligand shared between dimeric partners</note>
    </ligand>
</feature>
<feature type="binding site" description="in other chain" evidence="1">
    <location>
        <position position="21"/>
    </location>
    <ligand>
        <name>phosphate</name>
        <dbReference type="ChEBI" id="CHEBI:43474"/>
        <note>ligand shared between dimeric partners</note>
    </ligand>
</feature>
<feature type="binding site" description="in other chain" evidence="1">
    <location>
        <position position="25"/>
    </location>
    <ligand>
        <name>phosphate</name>
        <dbReference type="ChEBI" id="CHEBI:43474"/>
        <note>ligand shared between dimeric partners</note>
    </ligand>
</feature>
<feature type="binding site" evidence="1">
    <location>
        <position position="44"/>
    </location>
    <ligand>
        <name>phosphate</name>
        <dbReference type="ChEBI" id="CHEBI:43474"/>
        <note>ligand shared between dimeric partners</note>
    </ligand>
</feature>
<feature type="binding site" description="in other chain" evidence="1">
    <location>
        <begin position="88"/>
        <end position="91"/>
    </location>
    <ligand>
        <name>phosphate</name>
        <dbReference type="ChEBI" id="CHEBI:43474"/>
        <note>ligand shared between dimeric partners</note>
    </ligand>
</feature>
<feature type="binding site" description="in other chain" evidence="1">
    <location>
        <begin position="180"/>
        <end position="182"/>
    </location>
    <ligand>
        <name>a purine D-ribonucleoside</name>
        <dbReference type="ChEBI" id="CHEBI:142355"/>
        <note>ligand shared between dimeric partners</note>
    </ligand>
</feature>
<feature type="binding site" description="in other chain" evidence="1">
    <location>
        <begin position="204"/>
        <end position="205"/>
    </location>
    <ligand>
        <name>a purine D-ribonucleoside</name>
        <dbReference type="ChEBI" id="CHEBI:142355"/>
        <note>ligand shared between dimeric partners</note>
    </ligand>
</feature>
<feature type="site" description="Important for catalytic activity" evidence="2">
    <location>
        <position position="218"/>
    </location>
</feature>
<feature type="modified residue" description="N6-acetyllysine" evidence="2">
    <location>
        <position position="27"/>
    </location>
</feature>
<accession>Q327L2</accession>
<organism>
    <name type="scientific">Shigella dysenteriae serotype 1 (strain Sd197)</name>
    <dbReference type="NCBI Taxonomy" id="300267"/>
    <lineage>
        <taxon>Bacteria</taxon>
        <taxon>Pseudomonadati</taxon>
        <taxon>Pseudomonadota</taxon>
        <taxon>Gammaproteobacteria</taxon>
        <taxon>Enterobacterales</taxon>
        <taxon>Enterobacteriaceae</taxon>
        <taxon>Shigella</taxon>
    </lineage>
</organism>
<comment type="function">
    <text evidence="2">Catalyzes the reversible phosphorolytic breakdown of the N-glycosidic bond in the beta-(deoxy)ribonucleoside molecules, with the formation of the corresponding free purine bases and pentose-1-phosphate.</text>
</comment>
<comment type="catalytic activity">
    <reaction evidence="2">
        <text>a purine D-ribonucleoside + phosphate = a purine nucleobase + alpha-D-ribose 1-phosphate</text>
        <dbReference type="Rhea" id="RHEA:19805"/>
        <dbReference type="ChEBI" id="CHEBI:26386"/>
        <dbReference type="ChEBI" id="CHEBI:43474"/>
        <dbReference type="ChEBI" id="CHEBI:57720"/>
        <dbReference type="ChEBI" id="CHEBI:142355"/>
        <dbReference type="EC" id="2.4.2.1"/>
    </reaction>
</comment>
<comment type="catalytic activity">
    <reaction evidence="2">
        <text>a purine 2'-deoxy-D-ribonucleoside + phosphate = a purine nucleobase + 2-deoxy-alpha-D-ribose 1-phosphate</text>
        <dbReference type="Rhea" id="RHEA:36431"/>
        <dbReference type="ChEBI" id="CHEBI:26386"/>
        <dbReference type="ChEBI" id="CHEBI:43474"/>
        <dbReference type="ChEBI" id="CHEBI:57259"/>
        <dbReference type="ChEBI" id="CHEBI:142361"/>
        <dbReference type="EC" id="2.4.2.1"/>
    </reaction>
</comment>
<comment type="subunit">
    <text evidence="2">Homohexamer; trimer of homodimers.</text>
</comment>
<comment type="similarity">
    <text evidence="2">Belongs to the PNP/UDP phosphorylase family.</text>
</comment>
<reference key="1">
    <citation type="journal article" date="2005" name="Nucleic Acids Res.">
        <title>Genome dynamics and diversity of Shigella species, the etiologic agents of bacillary dysentery.</title>
        <authorList>
            <person name="Yang F."/>
            <person name="Yang J."/>
            <person name="Zhang X."/>
            <person name="Chen L."/>
            <person name="Jiang Y."/>
            <person name="Yan Y."/>
            <person name="Tang X."/>
            <person name="Wang J."/>
            <person name="Xiong Z."/>
            <person name="Dong J."/>
            <person name="Xue Y."/>
            <person name="Zhu Y."/>
            <person name="Xu X."/>
            <person name="Sun L."/>
            <person name="Chen S."/>
            <person name="Nie H."/>
            <person name="Peng J."/>
            <person name="Xu J."/>
            <person name="Wang Y."/>
            <person name="Yuan Z."/>
            <person name="Wen Y."/>
            <person name="Yao Z."/>
            <person name="Shen Y."/>
            <person name="Qiang B."/>
            <person name="Hou Y."/>
            <person name="Yu J."/>
            <person name="Jin Q."/>
        </authorList>
    </citation>
    <scope>NUCLEOTIDE SEQUENCE [LARGE SCALE GENOMIC DNA]</scope>
    <source>
        <strain>Sd197</strain>
    </source>
</reference>
<keyword id="KW-0007">Acetylation</keyword>
<keyword id="KW-0328">Glycosyltransferase</keyword>
<keyword id="KW-1185">Reference proteome</keyword>
<keyword id="KW-0808">Transferase</keyword>
<name>DEOD_SHIDS</name>
<evidence type="ECO:0000250" key="1">
    <source>
        <dbReference type="UniProtKB" id="P50389"/>
    </source>
</evidence>
<evidence type="ECO:0000255" key="2">
    <source>
        <dbReference type="HAMAP-Rule" id="MF_01627"/>
    </source>
</evidence>
<dbReference type="EC" id="2.4.2.1" evidence="2"/>
<dbReference type="EMBL" id="CP000034">
    <property type="protein sequence ID" value="ABB64493.1"/>
    <property type="molecule type" value="Genomic_DNA"/>
</dbReference>
<dbReference type="RefSeq" id="WP_000224880.1">
    <property type="nucleotide sequence ID" value="NC_007606.1"/>
</dbReference>
<dbReference type="RefSeq" id="YP_405984.1">
    <property type="nucleotide sequence ID" value="NC_007606.1"/>
</dbReference>
<dbReference type="SMR" id="Q327L2"/>
<dbReference type="STRING" id="300267.SDY_4644"/>
<dbReference type="EnsemblBacteria" id="ABB64493">
    <property type="protein sequence ID" value="ABB64493"/>
    <property type="gene ID" value="SDY_4644"/>
</dbReference>
<dbReference type="KEGG" id="sdy:SDY_4644"/>
<dbReference type="PATRIC" id="fig|300267.13.peg.5505"/>
<dbReference type="HOGENOM" id="CLU_068457_2_0_6"/>
<dbReference type="Proteomes" id="UP000002716">
    <property type="component" value="Chromosome"/>
</dbReference>
<dbReference type="GO" id="GO:0005829">
    <property type="term" value="C:cytosol"/>
    <property type="evidence" value="ECO:0007669"/>
    <property type="project" value="TreeGrafter"/>
</dbReference>
<dbReference type="GO" id="GO:0004731">
    <property type="term" value="F:purine-nucleoside phosphorylase activity"/>
    <property type="evidence" value="ECO:0007669"/>
    <property type="project" value="UniProtKB-UniRule"/>
</dbReference>
<dbReference type="GO" id="GO:0006152">
    <property type="term" value="P:purine nucleoside catabolic process"/>
    <property type="evidence" value="ECO:0007669"/>
    <property type="project" value="TreeGrafter"/>
</dbReference>
<dbReference type="CDD" id="cd09006">
    <property type="entry name" value="PNP_EcPNPI-like"/>
    <property type="match status" value="1"/>
</dbReference>
<dbReference type="FunFam" id="3.40.50.1580:FF:000002">
    <property type="entry name" value="Purine nucleoside phosphorylase DeoD-type"/>
    <property type="match status" value="1"/>
</dbReference>
<dbReference type="Gene3D" id="3.40.50.1580">
    <property type="entry name" value="Nucleoside phosphorylase domain"/>
    <property type="match status" value="1"/>
</dbReference>
<dbReference type="HAMAP" id="MF_01627">
    <property type="entry name" value="Pur_nucleosid_phosp"/>
    <property type="match status" value="1"/>
</dbReference>
<dbReference type="InterPro" id="IPR004402">
    <property type="entry name" value="DeoD-type"/>
</dbReference>
<dbReference type="InterPro" id="IPR018016">
    <property type="entry name" value="Nucleoside_phosphorylase_CS"/>
</dbReference>
<dbReference type="InterPro" id="IPR000845">
    <property type="entry name" value="Nucleoside_phosphorylase_d"/>
</dbReference>
<dbReference type="InterPro" id="IPR035994">
    <property type="entry name" value="Nucleoside_phosphorylase_sf"/>
</dbReference>
<dbReference type="NCBIfam" id="TIGR00107">
    <property type="entry name" value="deoD"/>
    <property type="match status" value="1"/>
</dbReference>
<dbReference type="NCBIfam" id="NF004489">
    <property type="entry name" value="PRK05819.1"/>
    <property type="match status" value="1"/>
</dbReference>
<dbReference type="NCBIfam" id="NF009914">
    <property type="entry name" value="PRK13374.1"/>
    <property type="match status" value="1"/>
</dbReference>
<dbReference type="PANTHER" id="PTHR43691:SF2">
    <property type="entry name" value="PURINE NUCLEOSIDE PHOSPHORYLASE DEOD-TYPE"/>
    <property type="match status" value="1"/>
</dbReference>
<dbReference type="PANTHER" id="PTHR43691">
    <property type="entry name" value="URIDINE PHOSPHORYLASE"/>
    <property type="match status" value="1"/>
</dbReference>
<dbReference type="Pfam" id="PF01048">
    <property type="entry name" value="PNP_UDP_1"/>
    <property type="match status" value="1"/>
</dbReference>
<dbReference type="SUPFAM" id="SSF53167">
    <property type="entry name" value="Purine and uridine phosphorylases"/>
    <property type="match status" value="1"/>
</dbReference>
<dbReference type="PROSITE" id="PS01232">
    <property type="entry name" value="PNP_UDP_1"/>
    <property type="match status" value="1"/>
</dbReference>
<proteinExistence type="inferred from homology"/>
<gene>
    <name evidence="2" type="primary">deoD</name>
    <name type="ordered locus">SDY_4644</name>
</gene>